<comment type="function">
    <text evidence="4 5">Regulator of chromosome structure during mitosis required for condensin-depleted chromosomes to retain their compact architecture through anaphase. Acts by mediating the recruitment of phopsphatase PP1-gamma subunit (PPP1CC) to chromatin at anaphase and into the following interphase. At anaphase onset, its association with chromatin targets a pool of PPP1CC to dephosphorylate substrates.</text>
</comment>
<comment type="subunit">
    <text evidence="4">Interacts with PPP1CC.</text>
</comment>
<comment type="subcellular location">
    <subcellularLocation>
        <location evidence="4">Nucleus</location>
    </subcellularLocation>
    <text>Excluded from the nucleolus. Present in nucleoplasm throughout the G1, S and G2 stages of the cell cycle. During M phase, it becomes diffuse throughout the cell as the nuclear membrane breaks down, and faintly accumulates later on metaphase chromatin. As the cell progresses to anaphase, it accumulates on chromatin.</text>
</comment>
<comment type="alternative products">
    <event type="alternative splicing"/>
    <isoform>
        <id>Q69YH5-1</id>
        <name>1</name>
        <sequence type="displayed"/>
    </isoform>
    <isoform>
        <id>Q69YH5-2</id>
        <name>2</name>
        <sequence type="described" ref="VSP_025598 VSP_025599"/>
    </isoform>
</comment>
<comment type="tissue specificity">
    <text evidence="4">Ubiquitously expressed.</text>
</comment>
<comment type="PTM">
    <text evidence="5">Phosphorylated by CDK1. May regulate its subcellular location.</text>
</comment>
<comment type="sequence caution" evidence="8">
    <conflict type="erroneous initiation">
        <sequence resource="EMBL-CDS" id="AAH36214"/>
    </conflict>
    <text>Truncated N-terminus.</text>
</comment>
<comment type="sequence caution" evidence="8">
    <conflict type="erroneous initiation">
        <sequence resource="EMBL-CDS" id="BAC05374"/>
    </conflict>
    <text>Truncated N-terminus.</text>
</comment>
<comment type="sequence caution" evidence="8">
    <conflict type="erroneous translation">
        <sequence resource="EMBL-CDS" id="CAH10577"/>
    </conflict>
    <text>Wrong choice of CDS.</text>
</comment>
<protein>
    <recommendedName>
        <fullName>Cell division cycle-associated protein 2</fullName>
    </recommendedName>
    <alternativeName>
        <fullName>Recruits PP1 onto mitotic chromatin at anaphase protein</fullName>
        <shortName>Repo-Man</shortName>
    </alternativeName>
</protein>
<reference key="1">
    <citation type="journal article" date="2007" name="BMC Genomics">
        <title>The full-ORF clone resource of the German cDNA consortium.</title>
        <authorList>
            <person name="Bechtel S."/>
            <person name="Rosenfelder H."/>
            <person name="Duda A."/>
            <person name="Schmidt C.P."/>
            <person name="Ernst U."/>
            <person name="Wellenreuther R."/>
            <person name="Mehrle A."/>
            <person name="Schuster C."/>
            <person name="Bahr A."/>
            <person name="Bloecker H."/>
            <person name="Heubner D."/>
            <person name="Hoerlein A."/>
            <person name="Michel G."/>
            <person name="Wedler H."/>
            <person name="Koehrer K."/>
            <person name="Ottenwaelder B."/>
            <person name="Poustka A."/>
            <person name="Wiemann S."/>
            <person name="Schupp I."/>
        </authorList>
    </citation>
    <scope>NUCLEOTIDE SEQUENCE [LARGE SCALE MRNA] (ISOFORM 1)</scope>
    <scope>VARIANT ILE-717</scope>
    <source>
        <tissue>Endometrial tumor</tissue>
        <tissue>Melanoma</tissue>
    </source>
</reference>
<reference key="2">
    <citation type="journal article" date="2006" name="Nature">
        <title>DNA sequence and analysis of human chromosome 8.</title>
        <authorList>
            <person name="Nusbaum C."/>
            <person name="Mikkelsen T.S."/>
            <person name="Zody M.C."/>
            <person name="Asakawa S."/>
            <person name="Taudien S."/>
            <person name="Garber M."/>
            <person name="Kodira C.D."/>
            <person name="Schueler M.G."/>
            <person name="Shimizu A."/>
            <person name="Whittaker C.A."/>
            <person name="Chang J.L."/>
            <person name="Cuomo C.A."/>
            <person name="Dewar K."/>
            <person name="FitzGerald M.G."/>
            <person name="Yang X."/>
            <person name="Allen N.R."/>
            <person name="Anderson S."/>
            <person name="Asakawa T."/>
            <person name="Blechschmidt K."/>
            <person name="Bloom T."/>
            <person name="Borowsky M.L."/>
            <person name="Butler J."/>
            <person name="Cook A."/>
            <person name="Corum B."/>
            <person name="DeArellano K."/>
            <person name="DeCaprio D."/>
            <person name="Dooley K.T."/>
            <person name="Dorris L. III"/>
            <person name="Engels R."/>
            <person name="Gloeckner G."/>
            <person name="Hafez N."/>
            <person name="Hagopian D.S."/>
            <person name="Hall J.L."/>
            <person name="Ishikawa S.K."/>
            <person name="Jaffe D.B."/>
            <person name="Kamat A."/>
            <person name="Kudoh J."/>
            <person name="Lehmann R."/>
            <person name="Lokitsang T."/>
            <person name="Macdonald P."/>
            <person name="Major J.E."/>
            <person name="Matthews C.D."/>
            <person name="Mauceli E."/>
            <person name="Menzel U."/>
            <person name="Mihalev A.H."/>
            <person name="Minoshima S."/>
            <person name="Murayama Y."/>
            <person name="Naylor J.W."/>
            <person name="Nicol R."/>
            <person name="Nguyen C."/>
            <person name="O'Leary S.B."/>
            <person name="O'Neill K."/>
            <person name="Parker S.C.J."/>
            <person name="Polley A."/>
            <person name="Raymond C.K."/>
            <person name="Reichwald K."/>
            <person name="Rodriguez J."/>
            <person name="Sasaki T."/>
            <person name="Schilhabel M."/>
            <person name="Siddiqui R."/>
            <person name="Smith C.L."/>
            <person name="Sneddon T.P."/>
            <person name="Talamas J.A."/>
            <person name="Tenzin P."/>
            <person name="Topham K."/>
            <person name="Venkataraman V."/>
            <person name="Wen G."/>
            <person name="Yamazaki S."/>
            <person name="Young S.K."/>
            <person name="Zeng Q."/>
            <person name="Zimmer A.R."/>
            <person name="Rosenthal A."/>
            <person name="Birren B.W."/>
            <person name="Platzer M."/>
            <person name="Shimizu N."/>
            <person name="Lander E.S."/>
        </authorList>
    </citation>
    <scope>NUCLEOTIDE SEQUENCE [LARGE SCALE GENOMIC DNA]</scope>
</reference>
<reference key="3">
    <citation type="journal article" date="2004" name="Genome Res.">
        <title>The status, quality, and expansion of the NIH full-length cDNA project: the Mammalian Gene Collection (MGC).</title>
        <authorList>
            <consortium name="The MGC Project Team"/>
        </authorList>
    </citation>
    <scope>NUCLEOTIDE SEQUENCE [LARGE SCALE MRNA] (ISOFORM 2)</scope>
    <scope>NUCLEOTIDE SEQUENCE [LARGE SCALE MRNA] OF 112-1023 (ISOFORM 1)</scope>
    <scope>VARIANTS ILE-717 AND SER-884</scope>
    <source>
        <tissue>Chondrosarcoma</tissue>
        <tissue>Skin</tissue>
        <tissue>Testis</tissue>
    </source>
</reference>
<reference key="4">
    <citation type="journal article" date="2001" name="Curr. Cancer Drug Targets">
        <title>Drug target discovery by gene expression analysis: cell cycle genes.</title>
        <authorList>
            <person name="Walker M.G."/>
        </authorList>
    </citation>
    <scope>NUCLEOTIDE SEQUENCE [MRNA] OF 559-1023 (ISOFORM 1)</scope>
    <scope>VARIANT ILE-717</scope>
</reference>
<reference key="5">
    <citation type="journal article" date="2004" name="Nat. Genet.">
        <title>Complete sequencing and characterization of 21,243 full-length human cDNAs.</title>
        <authorList>
            <person name="Ota T."/>
            <person name="Suzuki Y."/>
            <person name="Nishikawa T."/>
            <person name="Otsuki T."/>
            <person name="Sugiyama T."/>
            <person name="Irie R."/>
            <person name="Wakamatsu A."/>
            <person name="Hayashi K."/>
            <person name="Sato H."/>
            <person name="Nagai K."/>
            <person name="Kimura K."/>
            <person name="Makita H."/>
            <person name="Sekine M."/>
            <person name="Obayashi M."/>
            <person name="Nishi T."/>
            <person name="Shibahara T."/>
            <person name="Tanaka T."/>
            <person name="Ishii S."/>
            <person name="Yamamoto J."/>
            <person name="Saito K."/>
            <person name="Kawai Y."/>
            <person name="Isono Y."/>
            <person name="Nakamura Y."/>
            <person name="Nagahari K."/>
            <person name="Murakami K."/>
            <person name="Yasuda T."/>
            <person name="Iwayanagi T."/>
            <person name="Wagatsuma M."/>
            <person name="Shiratori A."/>
            <person name="Sudo H."/>
            <person name="Hosoiri T."/>
            <person name="Kaku Y."/>
            <person name="Kodaira H."/>
            <person name="Kondo H."/>
            <person name="Sugawara M."/>
            <person name="Takahashi M."/>
            <person name="Kanda K."/>
            <person name="Yokoi T."/>
            <person name="Furuya T."/>
            <person name="Kikkawa E."/>
            <person name="Omura Y."/>
            <person name="Abe K."/>
            <person name="Kamihara K."/>
            <person name="Katsuta N."/>
            <person name="Sato K."/>
            <person name="Tanikawa M."/>
            <person name="Yamazaki M."/>
            <person name="Ninomiya K."/>
            <person name="Ishibashi T."/>
            <person name="Yamashita H."/>
            <person name="Murakawa K."/>
            <person name="Fujimori K."/>
            <person name="Tanai H."/>
            <person name="Kimata M."/>
            <person name="Watanabe M."/>
            <person name="Hiraoka S."/>
            <person name="Chiba Y."/>
            <person name="Ishida S."/>
            <person name="Ono Y."/>
            <person name="Takiguchi S."/>
            <person name="Watanabe S."/>
            <person name="Yosida M."/>
            <person name="Hotuta T."/>
            <person name="Kusano J."/>
            <person name="Kanehori K."/>
            <person name="Takahashi-Fujii A."/>
            <person name="Hara H."/>
            <person name="Tanase T.-O."/>
            <person name="Nomura Y."/>
            <person name="Togiya S."/>
            <person name="Komai F."/>
            <person name="Hara R."/>
            <person name="Takeuchi K."/>
            <person name="Arita M."/>
            <person name="Imose N."/>
            <person name="Musashino K."/>
            <person name="Yuuki H."/>
            <person name="Oshima A."/>
            <person name="Sasaki N."/>
            <person name="Aotsuka S."/>
            <person name="Yoshikawa Y."/>
            <person name="Matsunawa H."/>
            <person name="Ichihara T."/>
            <person name="Shiohata N."/>
            <person name="Sano S."/>
            <person name="Moriya S."/>
            <person name="Momiyama H."/>
            <person name="Satoh N."/>
            <person name="Takami S."/>
            <person name="Terashima Y."/>
            <person name="Suzuki O."/>
            <person name="Nakagawa S."/>
            <person name="Senoh A."/>
            <person name="Mizoguchi H."/>
            <person name="Goto Y."/>
            <person name="Shimizu F."/>
            <person name="Wakebe H."/>
            <person name="Hishigaki H."/>
            <person name="Watanabe T."/>
            <person name="Sugiyama A."/>
            <person name="Takemoto M."/>
            <person name="Kawakami B."/>
            <person name="Yamazaki M."/>
            <person name="Watanabe K."/>
            <person name="Kumagai A."/>
            <person name="Itakura S."/>
            <person name="Fukuzumi Y."/>
            <person name="Fujimori Y."/>
            <person name="Komiyama M."/>
            <person name="Tashiro H."/>
            <person name="Tanigami A."/>
            <person name="Fujiwara T."/>
            <person name="Ono T."/>
            <person name="Yamada K."/>
            <person name="Fujii Y."/>
            <person name="Ozaki K."/>
            <person name="Hirao M."/>
            <person name="Ohmori Y."/>
            <person name="Kawabata A."/>
            <person name="Hikiji T."/>
            <person name="Kobatake N."/>
            <person name="Inagaki H."/>
            <person name="Ikema Y."/>
            <person name="Okamoto S."/>
            <person name="Okitani R."/>
            <person name="Kawakami T."/>
            <person name="Noguchi S."/>
            <person name="Itoh T."/>
            <person name="Shigeta K."/>
            <person name="Senba T."/>
            <person name="Matsumura K."/>
            <person name="Nakajima Y."/>
            <person name="Mizuno T."/>
            <person name="Morinaga M."/>
            <person name="Sasaki M."/>
            <person name="Togashi T."/>
            <person name="Oyama M."/>
            <person name="Hata H."/>
            <person name="Watanabe M."/>
            <person name="Komatsu T."/>
            <person name="Mizushima-Sugano J."/>
            <person name="Satoh T."/>
            <person name="Shirai Y."/>
            <person name="Takahashi Y."/>
            <person name="Nakagawa K."/>
            <person name="Okumura K."/>
            <person name="Nagase T."/>
            <person name="Nomura N."/>
            <person name="Kikuchi H."/>
            <person name="Masuho Y."/>
            <person name="Yamashita R."/>
            <person name="Nakai K."/>
            <person name="Yada T."/>
            <person name="Nakamura Y."/>
            <person name="Ohara O."/>
            <person name="Isogai T."/>
            <person name="Sugano S."/>
        </authorList>
    </citation>
    <scope>NUCLEOTIDE SEQUENCE [LARGE SCALE MRNA] OF 561-1023 (ISOFORM 1)</scope>
    <source>
        <tissue>Testis</tissue>
    </source>
</reference>
<reference key="6">
    <citation type="journal article" date="2006" name="Cell">
        <title>Global, in vivo, and site-specific phosphorylation dynamics in signaling networks.</title>
        <authorList>
            <person name="Olsen J.V."/>
            <person name="Blagoev B."/>
            <person name="Gnad F."/>
            <person name="Macek B."/>
            <person name="Kumar C."/>
            <person name="Mortensen P."/>
            <person name="Mann M."/>
        </authorList>
    </citation>
    <scope>PHOSPHORYLATION [LARGE SCALE ANALYSIS] AT SER-400</scope>
    <scope>IDENTIFICATION BY MASS SPECTROMETRY [LARGE SCALE ANALYSIS]</scope>
    <source>
        <tissue>Cervix carcinoma</tissue>
    </source>
</reference>
<reference key="7">
    <citation type="journal article" date="2006" name="J. Cell Biol.">
        <title>Repo-Man recruits PP1 gamma to chromatin and is essential for cell viability.</title>
        <authorList>
            <person name="Trinkle-Mulcahy L."/>
            <person name="Andersen J."/>
            <person name="Lam Y.W."/>
            <person name="Moorhead G."/>
            <person name="Mann M."/>
            <person name="Lamond A.I."/>
        </authorList>
    </citation>
    <scope>IDENTIFICATION BY MASS SPECTROMETRY</scope>
    <scope>FUNCTION</scope>
    <scope>SUBCELLULAR LOCATION</scope>
    <scope>TISSUE SPECIFICITY</scope>
    <scope>INTERACTION WITH PPP1CC</scope>
    <scope>MUTAGENESIS OF 393-VAL--PHE-395</scope>
</reference>
<reference key="8">
    <citation type="journal article" date="2006" name="Nat. Cell Biol.">
        <title>Condensin and Repo-Man-PP1 co-operate in the regulation of chromosome architecture during mitosis.</title>
        <authorList>
            <person name="Vagnarelli P."/>
            <person name="Hudson D.F."/>
            <person name="Ribeiro S.A."/>
            <person name="Trinkle-Mulcahy L."/>
            <person name="Spence J.M."/>
            <person name="Lai F."/>
            <person name="Farr C.J."/>
            <person name="Lamond A.I."/>
            <person name="Earnshaw W.C."/>
        </authorList>
    </citation>
    <scope>FUNCTION</scope>
    <scope>PHOSPHORYLATION</scope>
</reference>
<reference key="9">
    <citation type="journal article" date="2008" name="Proc. Natl. Acad. Sci. U.S.A.">
        <title>A quantitative atlas of mitotic phosphorylation.</title>
        <authorList>
            <person name="Dephoure N."/>
            <person name="Zhou C."/>
            <person name="Villen J."/>
            <person name="Beausoleil S.A."/>
            <person name="Bakalarski C.E."/>
            <person name="Elledge S.J."/>
            <person name="Gygi S.P."/>
        </authorList>
    </citation>
    <scope>PHOSPHORYLATION [LARGE SCALE ANALYSIS] AT SER-120; SER-126; SER-131; SER-291; SER-309; THR-312; SER-400; SER-407; THR-412; SER-591 AND SER-756</scope>
    <scope>IDENTIFICATION BY MASS SPECTROMETRY [LARGE SCALE ANALYSIS]</scope>
    <source>
        <tissue>Cervix carcinoma</tissue>
    </source>
</reference>
<reference key="10">
    <citation type="journal article" date="2009" name="Sci. Signal.">
        <title>Quantitative phosphoproteomic analysis of T cell receptor signaling reveals system-wide modulation of protein-protein interactions.</title>
        <authorList>
            <person name="Mayya V."/>
            <person name="Lundgren D.H."/>
            <person name="Hwang S.-I."/>
            <person name="Rezaul K."/>
            <person name="Wu L."/>
            <person name="Eng J.K."/>
            <person name="Rodionov V."/>
            <person name="Han D.K."/>
        </authorList>
    </citation>
    <scope>PHOSPHORYLATION [LARGE SCALE ANALYSIS] AT SER-400 AND THR-412</scope>
    <scope>IDENTIFICATION BY MASS SPECTROMETRY [LARGE SCALE ANALYSIS]</scope>
    <source>
        <tissue>Leukemic T-cell</tissue>
    </source>
</reference>
<reference key="11">
    <citation type="journal article" date="2010" name="Sci. Signal.">
        <title>Quantitative phosphoproteomics reveals widespread full phosphorylation site occupancy during mitosis.</title>
        <authorList>
            <person name="Olsen J.V."/>
            <person name="Vermeulen M."/>
            <person name="Santamaria A."/>
            <person name="Kumar C."/>
            <person name="Miller M.L."/>
            <person name="Jensen L.J."/>
            <person name="Gnad F."/>
            <person name="Cox J."/>
            <person name="Jensen T.S."/>
            <person name="Nigg E.A."/>
            <person name="Brunak S."/>
            <person name="Mann M."/>
        </authorList>
    </citation>
    <scope>PHOSPHORYLATION [LARGE SCALE ANALYSIS] AT SER-98; SER-400; SER-437 AND SER-591</scope>
    <scope>VARIANT [LARGE SCALE ANALYSIS] ILE-717</scope>
    <scope>IDENTIFICATION BY MASS SPECTROMETRY [LARGE SCALE ANALYSIS]</scope>
    <source>
        <tissue>Cervix carcinoma</tissue>
    </source>
</reference>
<reference key="12">
    <citation type="journal article" date="2011" name="Sci. Signal.">
        <title>System-wide temporal characterization of the proteome and phosphoproteome of human embryonic stem cell differentiation.</title>
        <authorList>
            <person name="Rigbolt K.T."/>
            <person name="Prokhorova T.A."/>
            <person name="Akimov V."/>
            <person name="Henningsen J."/>
            <person name="Johansen P.T."/>
            <person name="Kratchmarova I."/>
            <person name="Kassem M."/>
            <person name="Mann M."/>
            <person name="Olsen J.V."/>
            <person name="Blagoev B."/>
        </authorList>
    </citation>
    <scope>PHOSPHORYLATION [LARGE SCALE ANALYSIS] AT SER-936 AND SER-977</scope>
    <scope>VARIANT [LARGE SCALE ANALYSIS] ILE-717</scope>
    <scope>IDENTIFICATION BY MASS SPECTROMETRY [LARGE SCALE ANALYSIS]</scope>
</reference>
<reference key="13">
    <citation type="journal article" date="2013" name="J. Proteome Res.">
        <title>Toward a comprehensive characterization of a human cancer cell phosphoproteome.</title>
        <authorList>
            <person name="Zhou H."/>
            <person name="Di Palma S."/>
            <person name="Preisinger C."/>
            <person name="Peng M."/>
            <person name="Polat A.N."/>
            <person name="Heck A.J."/>
            <person name="Mohammed S."/>
        </authorList>
    </citation>
    <scope>PHOSPHORYLATION [LARGE SCALE ANALYSIS] AT SER-98; SER-120; SER-210; SER-400; SER-614; SER-710; SER-936; SER-977 AND SER-1000</scope>
    <scope>VARIANT [LARGE SCALE ANALYSIS] ILE-717</scope>
    <scope>IDENTIFICATION BY MASS SPECTROMETRY [LARGE SCALE ANALYSIS]</scope>
    <source>
        <tissue>Cervix carcinoma</tissue>
        <tissue>Erythroleukemia</tissue>
    </source>
</reference>
<reference key="14">
    <citation type="journal article" date="2017" name="Nat. Struct. Mol. Biol.">
        <title>Site-specific mapping of the human SUMO proteome reveals co-modification with phosphorylation.</title>
        <authorList>
            <person name="Hendriks I.A."/>
            <person name="Lyon D."/>
            <person name="Young C."/>
            <person name="Jensen L.J."/>
            <person name="Vertegaal A.C."/>
            <person name="Nielsen M.L."/>
        </authorList>
    </citation>
    <scope>SUMOYLATION [LARGE SCALE ANALYSIS] AT LYS-762</scope>
    <scope>IDENTIFICATION BY MASS SPECTROMETRY [LARGE SCALE ANALYSIS]</scope>
</reference>
<feature type="chain" id="PRO_0000287695" description="Cell division cycle-associated protein 2">
    <location>
        <begin position="1"/>
        <end position="1023"/>
    </location>
</feature>
<feature type="domain" description="PP1-binding">
    <location>
        <begin position="389"/>
        <end position="449"/>
    </location>
</feature>
<feature type="region of interest" description="Disordered" evidence="1">
    <location>
        <begin position="1"/>
        <end position="21"/>
    </location>
</feature>
<feature type="region of interest" description="Disordered" evidence="1">
    <location>
        <begin position="542"/>
        <end position="580"/>
    </location>
</feature>
<feature type="region of interest" description="Disordered" evidence="1">
    <location>
        <begin position="667"/>
        <end position="729"/>
    </location>
</feature>
<feature type="region of interest" description="Disordered" evidence="1">
    <location>
        <begin position="803"/>
        <end position="860"/>
    </location>
</feature>
<feature type="region of interest" description="Disordered" evidence="1">
    <location>
        <begin position="936"/>
        <end position="1023"/>
    </location>
</feature>
<feature type="compositionally biased region" description="Basic and acidic residues" evidence="1">
    <location>
        <begin position="1"/>
        <end position="14"/>
    </location>
</feature>
<feature type="compositionally biased region" description="Basic residues" evidence="1">
    <location>
        <begin position="561"/>
        <end position="573"/>
    </location>
</feature>
<feature type="compositionally biased region" description="Low complexity" evidence="1">
    <location>
        <begin position="679"/>
        <end position="691"/>
    </location>
</feature>
<feature type="compositionally biased region" description="Basic and acidic residues" evidence="1">
    <location>
        <begin position="696"/>
        <end position="706"/>
    </location>
</feature>
<feature type="compositionally biased region" description="Basic and acidic residues" evidence="1">
    <location>
        <begin position="803"/>
        <end position="816"/>
    </location>
</feature>
<feature type="compositionally biased region" description="Polar residues" evidence="1">
    <location>
        <begin position="979"/>
        <end position="992"/>
    </location>
</feature>
<feature type="compositionally biased region" description="Polar residues" evidence="1">
    <location>
        <begin position="1000"/>
        <end position="1010"/>
    </location>
</feature>
<feature type="compositionally biased region" description="Basic and acidic residues" evidence="1">
    <location>
        <begin position="1013"/>
        <end position="1023"/>
    </location>
</feature>
<feature type="modified residue" description="Phosphoserine" evidence="12 14">
    <location>
        <position position="98"/>
    </location>
</feature>
<feature type="modified residue" description="Phosphoserine" evidence="10 14">
    <location>
        <position position="120"/>
    </location>
</feature>
<feature type="modified residue" description="Phosphoserine" evidence="10">
    <location>
        <position position="126"/>
    </location>
</feature>
<feature type="modified residue" description="Phosphoserine" evidence="10">
    <location>
        <position position="131"/>
    </location>
</feature>
<feature type="modified residue" description="Phosphoserine" evidence="14">
    <location>
        <position position="210"/>
    </location>
</feature>
<feature type="modified residue" description="Phosphoserine" evidence="10">
    <location>
        <position position="291"/>
    </location>
</feature>
<feature type="modified residue" description="Phosphoserine" evidence="10">
    <location>
        <position position="309"/>
    </location>
</feature>
<feature type="modified residue" description="Phosphothreonine" evidence="10">
    <location>
        <position position="312"/>
    </location>
</feature>
<feature type="modified residue" description="Phosphoserine" evidence="9 10 11 12 14">
    <location>
        <position position="400"/>
    </location>
</feature>
<feature type="modified residue" description="Phosphoserine" evidence="10">
    <location>
        <position position="407"/>
    </location>
</feature>
<feature type="modified residue" description="Phosphothreonine" evidence="10 11">
    <location>
        <position position="412"/>
    </location>
</feature>
<feature type="modified residue" description="Phosphoserine" evidence="12">
    <location>
        <position position="437"/>
    </location>
</feature>
<feature type="modified residue" description="Phosphoserine" evidence="10 12">
    <location>
        <position position="591"/>
    </location>
</feature>
<feature type="modified residue" description="Phosphoserine" evidence="14">
    <location>
        <position position="614"/>
    </location>
</feature>
<feature type="modified residue" description="Phosphoserine" evidence="14">
    <location>
        <position position="710"/>
    </location>
</feature>
<feature type="modified residue" description="Phosphoserine" evidence="10">
    <location>
        <position position="756"/>
    </location>
</feature>
<feature type="modified residue" description="Phosphoserine" evidence="13 14">
    <location>
        <position position="936"/>
    </location>
</feature>
<feature type="modified residue" description="Phosphoserine" evidence="13 14">
    <location>
        <position position="977"/>
    </location>
</feature>
<feature type="modified residue" description="Phosphoserine" evidence="14">
    <location>
        <position position="1000"/>
    </location>
</feature>
<feature type="cross-link" description="Glycyl lysine isopeptide (Lys-Gly) (interchain with G-Cter in SUMO2)" evidence="15">
    <location>
        <position position="762"/>
    </location>
</feature>
<feature type="splice variant" id="VSP_025598" description="In isoform 2." evidence="7">
    <original>T</original>
    <variation>N</variation>
    <location>
        <position position="68"/>
    </location>
</feature>
<feature type="splice variant" id="VSP_025599" description="In isoform 2." evidence="7">
    <location>
        <begin position="69"/>
        <end position="1023"/>
    </location>
</feature>
<feature type="sequence variant" id="VAR_032350" description="In dbSNP:rs4872318." evidence="2 3 6 12 13 14">
    <original>V</original>
    <variation>I</variation>
    <location>
        <position position="717"/>
    </location>
</feature>
<feature type="sequence variant" id="VAR_032351" description="In dbSNP:rs3829009." evidence="3">
    <original>R</original>
    <variation>S</variation>
    <location>
        <position position="884"/>
    </location>
</feature>
<feature type="mutagenesis site" description="Abolishes interaction with PPP1CC but not subcellular location." evidence="4">
    <original>VTF</original>
    <variation>ATA</variation>
    <location>
        <begin position="393"/>
        <end position="395"/>
    </location>
</feature>
<feature type="sequence conflict" description="In Ref. 4; BG354575." evidence="8" ref="4">
    <original>Y</original>
    <variation>D</variation>
    <location>
        <position position="662"/>
    </location>
</feature>
<feature type="strand" evidence="16">
    <location>
        <begin position="402"/>
        <end position="404"/>
    </location>
</feature>
<gene>
    <name type="primary">CDCA2</name>
</gene>
<dbReference type="EMBL" id="AL833396">
    <property type="protein sequence ID" value="CAH10585.1"/>
    <property type="molecule type" value="mRNA"/>
</dbReference>
<dbReference type="EMBL" id="AL833627">
    <property type="protein sequence ID" value="CAH10577.1"/>
    <property type="status" value="ALT_SEQ"/>
    <property type="molecule type" value="mRNA"/>
</dbReference>
<dbReference type="EMBL" id="AC103779">
    <property type="status" value="NOT_ANNOTATED_CDS"/>
    <property type="molecule type" value="Genomic_DNA"/>
</dbReference>
<dbReference type="EMBL" id="BC036214">
    <property type="protein sequence ID" value="AAH36214.1"/>
    <property type="status" value="ALT_INIT"/>
    <property type="molecule type" value="mRNA"/>
</dbReference>
<dbReference type="EMBL" id="BC063651">
    <property type="protein sequence ID" value="AAH63651.1"/>
    <property type="molecule type" value="mRNA"/>
</dbReference>
<dbReference type="EMBL" id="BC085609">
    <property type="protein sequence ID" value="AAH85609.1"/>
    <property type="molecule type" value="mRNA"/>
</dbReference>
<dbReference type="EMBL" id="BC104451">
    <property type="protein sequence ID" value="AAI04452.1"/>
    <property type="molecule type" value="mRNA"/>
</dbReference>
<dbReference type="EMBL" id="BC104450">
    <property type="protein sequence ID" value="AAI04451.1"/>
    <property type="molecule type" value="mRNA"/>
</dbReference>
<dbReference type="EMBL" id="BG354575">
    <property type="status" value="NOT_ANNOTATED_CDS"/>
    <property type="molecule type" value="mRNA"/>
</dbReference>
<dbReference type="EMBL" id="AK098670">
    <property type="protein sequence ID" value="BAC05374.1"/>
    <property type="status" value="ALT_INIT"/>
    <property type="molecule type" value="mRNA"/>
</dbReference>
<dbReference type="CCDS" id="CCDS6049.1">
    <molecule id="Q69YH5-1"/>
</dbReference>
<dbReference type="RefSeq" id="NP_001304835.1">
    <property type="nucleotide sequence ID" value="NM_001317906.1"/>
</dbReference>
<dbReference type="RefSeq" id="NP_001304836.1">
    <property type="nucleotide sequence ID" value="NM_001317907.1"/>
</dbReference>
<dbReference type="RefSeq" id="NP_689775.2">
    <molecule id="Q69YH5-1"/>
    <property type="nucleotide sequence ID" value="NM_152562.3"/>
</dbReference>
<dbReference type="PDB" id="5INB">
    <property type="method" value="X-ray"/>
    <property type="resolution" value="1.30 A"/>
    <property type="chains" value="B=383-423"/>
</dbReference>
<dbReference type="PDB" id="5IOH">
    <property type="method" value="X-ray"/>
    <property type="resolution" value="2.57 A"/>
    <property type="chains" value="B/D=383-441"/>
</dbReference>
<dbReference type="PDB" id="5SW9">
    <property type="method" value="X-ray"/>
    <property type="resolution" value="2.85 A"/>
    <property type="chains" value="B=581-601"/>
</dbReference>
<dbReference type="PDBsum" id="5INB"/>
<dbReference type="PDBsum" id="5IOH"/>
<dbReference type="PDBsum" id="5SW9"/>
<dbReference type="SMR" id="Q69YH5"/>
<dbReference type="BioGRID" id="127593">
    <property type="interactions" value="78"/>
</dbReference>
<dbReference type="ELM" id="Q69YH5"/>
<dbReference type="FunCoup" id="Q69YH5">
    <property type="interactions" value="2633"/>
</dbReference>
<dbReference type="IntAct" id="Q69YH5">
    <property type="interactions" value="49"/>
</dbReference>
<dbReference type="MINT" id="Q69YH5"/>
<dbReference type="STRING" id="9606.ENSP00000328228"/>
<dbReference type="GlyGen" id="Q69YH5">
    <property type="glycosylation" value="2 sites, 1 O-linked glycan (1 site)"/>
</dbReference>
<dbReference type="iPTMnet" id="Q69YH5"/>
<dbReference type="PhosphoSitePlus" id="Q69YH5"/>
<dbReference type="SwissPalm" id="Q69YH5"/>
<dbReference type="BioMuta" id="CDCA2"/>
<dbReference type="DMDM" id="308153420"/>
<dbReference type="jPOST" id="Q69YH5"/>
<dbReference type="MassIVE" id="Q69YH5"/>
<dbReference type="PaxDb" id="9606-ENSP00000328228"/>
<dbReference type="PeptideAtlas" id="Q69YH5"/>
<dbReference type="ProteomicsDB" id="66154">
    <molecule id="Q69YH5-1"/>
</dbReference>
<dbReference type="ProteomicsDB" id="66155">
    <molecule id="Q69YH5-2"/>
</dbReference>
<dbReference type="Pumba" id="Q69YH5"/>
<dbReference type="Antibodypedia" id="10001">
    <property type="antibodies" value="143 antibodies from 27 providers"/>
</dbReference>
<dbReference type="DNASU" id="157313"/>
<dbReference type="Ensembl" id="ENST00000330560.8">
    <molecule id="Q69YH5-1"/>
    <property type="protein sequence ID" value="ENSP00000328228.3"/>
    <property type="gene ID" value="ENSG00000184661.14"/>
</dbReference>
<dbReference type="GeneID" id="157313"/>
<dbReference type="KEGG" id="hsa:157313"/>
<dbReference type="MANE-Select" id="ENST00000330560.8">
    <property type="protein sequence ID" value="ENSP00000328228.3"/>
    <property type="RefSeq nucleotide sequence ID" value="NM_152562.4"/>
    <property type="RefSeq protein sequence ID" value="NP_689775.2"/>
</dbReference>
<dbReference type="UCSC" id="uc003xep.2">
    <molecule id="Q69YH5-1"/>
    <property type="organism name" value="human"/>
</dbReference>
<dbReference type="AGR" id="HGNC:14623"/>
<dbReference type="CTD" id="157313"/>
<dbReference type="DisGeNET" id="157313"/>
<dbReference type="GeneCards" id="CDCA2"/>
<dbReference type="HGNC" id="HGNC:14623">
    <property type="gene designation" value="CDCA2"/>
</dbReference>
<dbReference type="HPA" id="ENSG00000184661">
    <property type="expression patterns" value="Group enriched (bone marrow, lymphoid tissue, testis)"/>
</dbReference>
<dbReference type="MIM" id="618785">
    <property type="type" value="gene"/>
</dbReference>
<dbReference type="neXtProt" id="NX_Q69YH5"/>
<dbReference type="OpenTargets" id="ENSG00000184661"/>
<dbReference type="PharmGKB" id="PA26275"/>
<dbReference type="VEuPathDB" id="HostDB:ENSG00000184661"/>
<dbReference type="eggNOG" id="ENOG502S079">
    <property type="taxonomic scope" value="Eukaryota"/>
</dbReference>
<dbReference type="GeneTree" id="ENSGT00940000154352"/>
<dbReference type="HOGENOM" id="CLU_011968_0_0_1"/>
<dbReference type="InParanoid" id="Q69YH5"/>
<dbReference type="OMA" id="QKECDCS"/>
<dbReference type="OrthoDB" id="9947694at2759"/>
<dbReference type="PAN-GO" id="Q69YH5">
    <property type="GO annotations" value="4 GO annotations based on evolutionary models"/>
</dbReference>
<dbReference type="PhylomeDB" id="Q69YH5"/>
<dbReference type="TreeFam" id="TF336000"/>
<dbReference type="PathwayCommons" id="Q69YH5"/>
<dbReference type="SignaLink" id="Q69YH5"/>
<dbReference type="SIGNOR" id="Q69YH5"/>
<dbReference type="BioGRID-ORCS" id="157313">
    <property type="hits" value="34 hits in 1074 CRISPR screens"/>
</dbReference>
<dbReference type="ChiTaRS" id="CDCA2">
    <property type="organism name" value="human"/>
</dbReference>
<dbReference type="GenomeRNAi" id="157313"/>
<dbReference type="Pharos" id="Q69YH5">
    <property type="development level" value="Tbio"/>
</dbReference>
<dbReference type="PRO" id="PR:Q69YH5"/>
<dbReference type="Proteomes" id="UP000005640">
    <property type="component" value="Chromosome 8"/>
</dbReference>
<dbReference type="RNAct" id="Q69YH5">
    <property type="molecule type" value="protein"/>
</dbReference>
<dbReference type="Bgee" id="ENSG00000184661">
    <property type="expression patterns" value="Expressed in secondary oocyte and 127 other cell types or tissues"/>
</dbReference>
<dbReference type="ExpressionAtlas" id="Q69YH5">
    <property type="expression patterns" value="baseline and differential"/>
</dbReference>
<dbReference type="GO" id="GO:0005694">
    <property type="term" value="C:chromosome"/>
    <property type="evidence" value="ECO:0000314"/>
    <property type="project" value="MGI"/>
</dbReference>
<dbReference type="GO" id="GO:0005829">
    <property type="term" value="C:cytosol"/>
    <property type="evidence" value="ECO:0000314"/>
    <property type="project" value="HPA"/>
</dbReference>
<dbReference type="GO" id="GO:0005654">
    <property type="term" value="C:nucleoplasm"/>
    <property type="evidence" value="ECO:0000314"/>
    <property type="project" value="HPA"/>
</dbReference>
<dbReference type="GO" id="GO:0005634">
    <property type="term" value="C:nucleus"/>
    <property type="evidence" value="ECO:0000318"/>
    <property type="project" value="GO_Central"/>
</dbReference>
<dbReference type="GO" id="GO:0019888">
    <property type="term" value="F:protein phosphatase regulator activity"/>
    <property type="evidence" value="ECO:0000315"/>
    <property type="project" value="MGI"/>
</dbReference>
<dbReference type="GO" id="GO:0051301">
    <property type="term" value="P:cell division"/>
    <property type="evidence" value="ECO:0007669"/>
    <property type="project" value="UniProtKB-KW"/>
</dbReference>
<dbReference type="GO" id="GO:0007059">
    <property type="term" value="P:chromosome segregation"/>
    <property type="evidence" value="ECO:0007669"/>
    <property type="project" value="Ensembl"/>
</dbReference>
<dbReference type="GO" id="GO:0007088">
    <property type="term" value="P:regulation of mitotic nuclear division"/>
    <property type="evidence" value="ECO:0000318"/>
    <property type="project" value="GO_Central"/>
</dbReference>
<dbReference type="InterPro" id="IPR029334">
    <property type="entry name" value="PP1-bd"/>
</dbReference>
<dbReference type="PANTHER" id="PTHR21603">
    <property type="entry name" value="ANTIGEN KI-67-LIKE PROTEIN"/>
    <property type="match status" value="1"/>
</dbReference>
<dbReference type="PANTHER" id="PTHR21603:SF16">
    <property type="entry name" value="CELL DIVISION CYCLE-ASSOCIATED PROTEIN 2"/>
    <property type="match status" value="1"/>
</dbReference>
<dbReference type="Pfam" id="PF15276">
    <property type="entry name" value="PP1_bind"/>
    <property type="match status" value="1"/>
</dbReference>
<evidence type="ECO:0000256" key="1">
    <source>
        <dbReference type="SAM" id="MobiDB-lite"/>
    </source>
</evidence>
<evidence type="ECO:0000269" key="2">
    <source>
    </source>
</evidence>
<evidence type="ECO:0000269" key="3">
    <source>
    </source>
</evidence>
<evidence type="ECO:0000269" key="4">
    <source>
    </source>
</evidence>
<evidence type="ECO:0000269" key="5">
    <source>
    </source>
</evidence>
<evidence type="ECO:0000269" key="6">
    <source>
    </source>
</evidence>
<evidence type="ECO:0000303" key="7">
    <source>
    </source>
</evidence>
<evidence type="ECO:0000305" key="8"/>
<evidence type="ECO:0007744" key="9">
    <source>
    </source>
</evidence>
<evidence type="ECO:0007744" key="10">
    <source>
    </source>
</evidence>
<evidence type="ECO:0007744" key="11">
    <source>
    </source>
</evidence>
<evidence type="ECO:0007744" key="12">
    <source>
    </source>
</evidence>
<evidence type="ECO:0007744" key="13">
    <source>
    </source>
</evidence>
<evidence type="ECO:0007744" key="14">
    <source>
    </source>
</evidence>
<evidence type="ECO:0007744" key="15">
    <source>
    </source>
</evidence>
<evidence type="ECO:0007829" key="16">
    <source>
        <dbReference type="PDB" id="5INB"/>
    </source>
</evidence>
<sequence length="1023" mass="112676">MDANSKDKPPETKESAMNNAGNASFILGTGKIVTPQKHAELPPNPCTPDTFKSPLNFSTVTVEQLGITPESFVRNSAGKSSSYLKKCRRRSAVGARGSPETNHLIRFIARQQNIKNARKSPLAQDSPSQGSPALYRNVNTLRERISAFQSAFHSIKENEKMTGCLEFSEAGKESEMTDLTRKEGLSACQQSGFPAVLSSKRRRISYQRDSDENLTDAEGKVIGLQIFNIDTDRACAVETSVDLSEISSKLGSTQSGFLVEESLPLSELTETSNALKVADCVVGKGSSDAVSPDTFTAEVSSDAVPDVRSPATPACRRDLPTPKTFVLRSVLKKPSVKMCLESLQEHCNNLYDDDGTHPSLISNLPNCCKEKEAEDEENFEAPAFLNMRKRKRVTFGEDLSPEVFDESLPANTPLRKGGTPVCKKDFSGLSSLLLEQSPVPEPLPQPDFDDKGENLENIEPLQVSFAVLSSPNKSSISETLSGTDTFSSSNNHEKISSPKVGRITRTSNRRNQLVSVVEESVCNLLNTEVQPCKEKKINRRKSQETKCTKRALPKKSQVLKSCRKKKGKGKKSVQKSLYGERDIASKKPLLSPIPELPEVPEMTPSIPSIRRLGSGYFSSNGKLEEVKTPKNPVKRKDLLRHDPDLHMHQGYDKYDVSEFCSYIKSSSSLGNATSDEDPNTNIMNINENKNIPKAKNKSESENEPKAGTDSPVSCASVTEERVASDSPKPALTLQQGQEFSAGGQNAENLCQFFKISPDLNIKCERKDDFLGAAEGKLQCNRLMPNSQKDCHCLGDVLIENTKESKSQSEDLGRKPMESSSVVSCRDRKDRRRSMCYSDGRSLHLEKNGNHTPSSSVGSSVEISLENSELFKDLSDAIEQTFQRRNSETKVRRSTRLQKDLENEGLVWISLPLPSTSQKAKRRTICTFDSSGFESMSPIKETVSSRQKPQMAPPVSDPENSQGPAAGSSDEPGKRRKSFCISTLANTKATSQFKGYRRRSSLNGKGESSLTALERIEHNGERKQ</sequence>
<organism>
    <name type="scientific">Homo sapiens</name>
    <name type="common">Human</name>
    <dbReference type="NCBI Taxonomy" id="9606"/>
    <lineage>
        <taxon>Eukaryota</taxon>
        <taxon>Metazoa</taxon>
        <taxon>Chordata</taxon>
        <taxon>Craniata</taxon>
        <taxon>Vertebrata</taxon>
        <taxon>Euteleostomi</taxon>
        <taxon>Mammalia</taxon>
        <taxon>Eutheria</taxon>
        <taxon>Euarchontoglires</taxon>
        <taxon>Primates</taxon>
        <taxon>Haplorrhini</taxon>
        <taxon>Catarrhini</taxon>
        <taxon>Hominidae</taxon>
        <taxon>Homo</taxon>
    </lineage>
</organism>
<keyword id="KW-0002">3D-structure</keyword>
<keyword id="KW-0025">Alternative splicing</keyword>
<keyword id="KW-0131">Cell cycle</keyword>
<keyword id="KW-0132">Cell division</keyword>
<keyword id="KW-1017">Isopeptide bond</keyword>
<keyword id="KW-0498">Mitosis</keyword>
<keyword id="KW-0539">Nucleus</keyword>
<keyword id="KW-0597">Phosphoprotein</keyword>
<keyword id="KW-1267">Proteomics identification</keyword>
<keyword id="KW-1185">Reference proteome</keyword>
<keyword id="KW-0832">Ubl conjugation</keyword>
<accession>Q69YH5</accession>
<accession>Q3SX74</accession>
<accession>Q4G0W0</accession>
<accession>Q5RKN0</accession>
<accession>Q69YI4</accession>
<accession>Q6P464</accession>
<accession>Q8N7C1</accession>
<proteinExistence type="evidence at protein level"/>
<name>CDCA2_HUMAN</name>